<organism>
    <name type="scientific">Treponema pallidum (strain Nichols)</name>
    <dbReference type="NCBI Taxonomy" id="243276"/>
    <lineage>
        <taxon>Bacteria</taxon>
        <taxon>Pseudomonadati</taxon>
        <taxon>Spirochaetota</taxon>
        <taxon>Spirochaetia</taxon>
        <taxon>Spirochaetales</taxon>
        <taxon>Treponemataceae</taxon>
        <taxon>Treponema</taxon>
    </lineage>
</organism>
<sequence>MVTDGASPRSGVSLIIGRPSSGKSTFLNAVCGYKVSIVSPIPQTTRNTVRGIVNIESDQIVFMDTPGYHRSDRKFNLRLQSLVHSNVKDADVLLYLVDATRQFGEEEAAICALLAPYQKTRVLLAFNKVDVLHNSTSCDEHAFLHRQGSVLRAGSLGRALHAALPHLPADRVFTISALHQVGLDALMRTLRDLLPEAAPLYPQDCYTDQTIAFRVTELIREQAIARCRDELPHALYAGVEDMELRRGKRELWCRAFLAVERESQKAVLVGKKGAVIRAIRLDAIRALRTLLPYHISLDIRVKVDRSWRQRDHTLSSLLY</sequence>
<dbReference type="EMBL" id="AE000520">
    <property type="protein sequence ID" value="AAC65525.1"/>
    <property type="molecule type" value="Genomic_DNA"/>
</dbReference>
<dbReference type="PIR" id="B71312">
    <property type="entry name" value="B71312"/>
</dbReference>
<dbReference type="RefSeq" id="WP_010881988.1">
    <property type="nucleotide sequence ID" value="NC_021490.2"/>
</dbReference>
<dbReference type="SMR" id="O83552"/>
<dbReference type="IntAct" id="O83552">
    <property type="interactions" value="2"/>
</dbReference>
<dbReference type="STRING" id="243276.TP_0541"/>
<dbReference type="EnsemblBacteria" id="AAC65525">
    <property type="protein sequence ID" value="AAC65525"/>
    <property type="gene ID" value="TP_0541"/>
</dbReference>
<dbReference type="GeneID" id="93876310"/>
<dbReference type="KEGG" id="tpa:TP_0541"/>
<dbReference type="KEGG" id="tpw:TPANIC_0541"/>
<dbReference type="eggNOG" id="COG1159">
    <property type="taxonomic scope" value="Bacteria"/>
</dbReference>
<dbReference type="HOGENOM" id="CLU_038009_1_0_12"/>
<dbReference type="OrthoDB" id="9805918at2"/>
<dbReference type="Proteomes" id="UP000000811">
    <property type="component" value="Chromosome"/>
</dbReference>
<dbReference type="GO" id="GO:0005829">
    <property type="term" value="C:cytosol"/>
    <property type="evidence" value="ECO:0007669"/>
    <property type="project" value="TreeGrafter"/>
</dbReference>
<dbReference type="GO" id="GO:0005886">
    <property type="term" value="C:plasma membrane"/>
    <property type="evidence" value="ECO:0007669"/>
    <property type="project" value="UniProtKB-SubCell"/>
</dbReference>
<dbReference type="GO" id="GO:0005525">
    <property type="term" value="F:GTP binding"/>
    <property type="evidence" value="ECO:0007669"/>
    <property type="project" value="UniProtKB-UniRule"/>
</dbReference>
<dbReference type="GO" id="GO:0003924">
    <property type="term" value="F:GTPase activity"/>
    <property type="evidence" value="ECO:0007669"/>
    <property type="project" value="UniProtKB-UniRule"/>
</dbReference>
<dbReference type="GO" id="GO:0043024">
    <property type="term" value="F:ribosomal small subunit binding"/>
    <property type="evidence" value="ECO:0007669"/>
    <property type="project" value="TreeGrafter"/>
</dbReference>
<dbReference type="GO" id="GO:0070181">
    <property type="term" value="F:small ribosomal subunit rRNA binding"/>
    <property type="evidence" value="ECO:0007669"/>
    <property type="project" value="UniProtKB-UniRule"/>
</dbReference>
<dbReference type="GO" id="GO:0000028">
    <property type="term" value="P:ribosomal small subunit assembly"/>
    <property type="evidence" value="ECO:0007669"/>
    <property type="project" value="TreeGrafter"/>
</dbReference>
<dbReference type="CDD" id="cd04163">
    <property type="entry name" value="Era"/>
    <property type="match status" value="1"/>
</dbReference>
<dbReference type="CDD" id="cd22534">
    <property type="entry name" value="KH-II_Era"/>
    <property type="match status" value="1"/>
</dbReference>
<dbReference type="Gene3D" id="3.30.300.20">
    <property type="match status" value="1"/>
</dbReference>
<dbReference type="Gene3D" id="3.40.50.300">
    <property type="entry name" value="P-loop containing nucleotide triphosphate hydrolases"/>
    <property type="match status" value="1"/>
</dbReference>
<dbReference type="HAMAP" id="MF_00367">
    <property type="entry name" value="GTPase_Era"/>
    <property type="match status" value="1"/>
</dbReference>
<dbReference type="InterPro" id="IPR030388">
    <property type="entry name" value="G_ERA_dom"/>
</dbReference>
<dbReference type="InterPro" id="IPR006073">
    <property type="entry name" value="GTP-bd"/>
</dbReference>
<dbReference type="InterPro" id="IPR005662">
    <property type="entry name" value="GTPase_Era-like"/>
</dbReference>
<dbReference type="InterPro" id="IPR015946">
    <property type="entry name" value="KH_dom-like_a/b"/>
</dbReference>
<dbReference type="InterPro" id="IPR004044">
    <property type="entry name" value="KH_dom_type_2"/>
</dbReference>
<dbReference type="InterPro" id="IPR009019">
    <property type="entry name" value="KH_sf_prok-type"/>
</dbReference>
<dbReference type="InterPro" id="IPR027417">
    <property type="entry name" value="P-loop_NTPase"/>
</dbReference>
<dbReference type="InterPro" id="IPR005225">
    <property type="entry name" value="Small_GTP-bd"/>
</dbReference>
<dbReference type="NCBIfam" id="TIGR00436">
    <property type="entry name" value="era"/>
    <property type="match status" value="1"/>
</dbReference>
<dbReference type="NCBIfam" id="NF000908">
    <property type="entry name" value="PRK00089.1"/>
    <property type="match status" value="1"/>
</dbReference>
<dbReference type="NCBIfam" id="TIGR00231">
    <property type="entry name" value="small_GTP"/>
    <property type="match status" value="1"/>
</dbReference>
<dbReference type="PANTHER" id="PTHR42698">
    <property type="entry name" value="GTPASE ERA"/>
    <property type="match status" value="1"/>
</dbReference>
<dbReference type="PANTHER" id="PTHR42698:SF1">
    <property type="entry name" value="GTPASE ERA, MITOCHONDRIAL"/>
    <property type="match status" value="1"/>
</dbReference>
<dbReference type="Pfam" id="PF07650">
    <property type="entry name" value="KH_2"/>
    <property type="match status" value="1"/>
</dbReference>
<dbReference type="Pfam" id="PF01926">
    <property type="entry name" value="MMR_HSR1"/>
    <property type="match status" value="1"/>
</dbReference>
<dbReference type="SUPFAM" id="SSF52540">
    <property type="entry name" value="P-loop containing nucleoside triphosphate hydrolases"/>
    <property type="match status" value="1"/>
</dbReference>
<dbReference type="SUPFAM" id="SSF54814">
    <property type="entry name" value="Prokaryotic type KH domain (KH-domain type II)"/>
    <property type="match status" value="1"/>
</dbReference>
<dbReference type="PROSITE" id="PS51713">
    <property type="entry name" value="G_ERA"/>
    <property type="match status" value="1"/>
</dbReference>
<comment type="function">
    <text evidence="1">An essential GTPase that binds both GDP and GTP, with rapid nucleotide exchange. Plays a role in 16S rRNA processing and 30S ribosomal subunit biogenesis and possibly also in cell cycle regulation and energy metabolism.</text>
</comment>
<comment type="subunit">
    <text evidence="1">Monomer.</text>
</comment>
<comment type="subcellular location">
    <subcellularLocation>
        <location>Cytoplasm</location>
    </subcellularLocation>
    <subcellularLocation>
        <location evidence="1">Cell inner membrane</location>
        <topology evidence="1">Peripheral membrane protein</topology>
    </subcellularLocation>
</comment>
<comment type="similarity">
    <text evidence="1 2">Belongs to the TRAFAC class TrmE-Era-EngA-EngB-Septin-like GTPase superfamily. Era GTPase family.</text>
</comment>
<name>ERA_TREPA</name>
<keyword id="KW-0997">Cell inner membrane</keyword>
<keyword id="KW-1003">Cell membrane</keyword>
<keyword id="KW-0963">Cytoplasm</keyword>
<keyword id="KW-0342">GTP-binding</keyword>
<keyword id="KW-0472">Membrane</keyword>
<keyword id="KW-0547">Nucleotide-binding</keyword>
<keyword id="KW-1185">Reference proteome</keyword>
<keyword id="KW-0690">Ribosome biogenesis</keyword>
<keyword id="KW-0694">RNA-binding</keyword>
<keyword id="KW-0699">rRNA-binding</keyword>
<gene>
    <name evidence="1" type="primary">era</name>
    <name type="ordered locus">TP_0541</name>
</gene>
<accession>O83552</accession>
<evidence type="ECO:0000255" key="1">
    <source>
        <dbReference type="HAMAP-Rule" id="MF_00367"/>
    </source>
</evidence>
<evidence type="ECO:0000255" key="2">
    <source>
        <dbReference type="PROSITE-ProRule" id="PRU01050"/>
    </source>
</evidence>
<proteinExistence type="inferred from homology"/>
<reference key="1">
    <citation type="journal article" date="1998" name="Science">
        <title>Complete genome sequence of Treponema pallidum, the syphilis spirochete.</title>
        <authorList>
            <person name="Fraser C.M."/>
            <person name="Norris S.J."/>
            <person name="Weinstock G.M."/>
            <person name="White O."/>
            <person name="Sutton G.G."/>
            <person name="Dodson R.J."/>
            <person name="Gwinn M.L."/>
            <person name="Hickey E.K."/>
            <person name="Clayton R.A."/>
            <person name="Ketchum K.A."/>
            <person name="Sodergren E."/>
            <person name="Hardham J.M."/>
            <person name="McLeod M.P."/>
            <person name="Salzberg S.L."/>
            <person name="Peterson J.D."/>
            <person name="Khalak H.G."/>
            <person name="Richardson D.L."/>
            <person name="Howell J.K."/>
            <person name="Chidambaram M."/>
            <person name="Utterback T.R."/>
            <person name="McDonald L.A."/>
            <person name="Artiach P."/>
            <person name="Bowman C."/>
            <person name="Cotton M.D."/>
            <person name="Fujii C."/>
            <person name="Garland S.A."/>
            <person name="Hatch B."/>
            <person name="Horst K."/>
            <person name="Roberts K.M."/>
            <person name="Sandusky M."/>
            <person name="Weidman J.F."/>
            <person name="Smith H.O."/>
            <person name="Venter J.C."/>
        </authorList>
    </citation>
    <scope>NUCLEOTIDE SEQUENCE [LARGE SCALE GENOMIC DNA]</scope>
    <source>
        <strain>Nichols</strain>
    </source>
</reference>
<feature type="chain" id="PRO_0000180068" description="GTPase Era">
    <location>
        <begin position="1"/>
        <end position="319"/>
    </location>
</feature>
<feature type="domain" description="Era-type G" evidence="2">
    <location>
        <begin position="9"/>
        <end position="196"/>
    </location>
</feature>
<feature type="domain" description="KH type-2" evidence="1">
    <location>
        <begin position="227"/>
        <end position="303"/>
    </location>
</feature>
<feature type="region of interest" description="G1" evidence="2">
    <location>
        <begin position="17"/>
        <end position="24"/>
    </location>
</feature>
<feature type="region of interest" description="G2" evidence="2">
    <location>
        <begin position="43"/>
        <end position="47"/>
    </location>
</feature>
<feature type="region of interest" description="G3" evidence="2">
    <location>
        <begin position="64"/>
        <end position="67"/>
    </location>
</feature>
<feature type="region of interest" description="G4" evidence="2">
    <location>
        <begin position="127"/>
        <end position="130"/>
    </location>
</feature>
<feature type="region of interest" description="G5" evidence="2">
    <location>
        <begin position="175"/>
        <end position="177"/>
    </location>
</feature>
<feature type="binding site" evidence="1">
    <location>
        <begin position="17"/>
        <end position="24"/>
    </location>
    <ligand>
        <name>GTP</name>
        <dbReference type="ChEBI" id="CHEBI:37565"/>
    </ligand>
</feature>
<feature type="binding site" evidence="1">
    <location>
        <begin position="64"/>
        <end position="68"/>
    </location>
    <ligand>
        <name>GTP</name>
        <dbReference type="ChEBI" id="CHEBI:37565"/>
    </ligand>
</feature>
<feature type="binding site" evidence="1">
    <location>
        <begin position="127"/>
        <end position="130"/>
    </location>
    <ligand>
        <name>GTP</name>
        <dbReference type="ChEBI" id="CHEBI:37565"/>
    </ligand>
</feature>
<protein>
    <recommendedName>
        <fullName evidence="1">GTPase Era</fullName>
    </recommendedName>
</protein>